<accession>A5FPK5</accession>
<feature type="chain" id="PRO_0000331039" description="SsrA-binding protein">
    <location>
        <begin position="1"/>
        <end position="172"/>
    </location>
</feature>
<comment type="function">
    <text evidence="1">Required for rescue of stalled ribosomes mediated by trans-translation. Binds to transfer-messenger RNA (tmRNA), required for stable association of tmRNA with ribosomes. tmRNA and SmpB together mimic tRNA shape, replacing the anticodon stem-loop with SmpB. tmRNA is encoded by the ssrA gene; the 2 termini fold to resemble tRNA(Ala) and it encodes a 'tag peptide', a short internal open reading frame. During trans-translation Ala-aminoacylated tmRNA acts like a tRNA, entering the A-site of stalled ribosomes, displacing the stalled mRNA. The ribosome then switches to translate the ORF on the tmRNA; the nascent peptide is terminated with the 'tag peptide' encoded by the tmRNA and targeted for degradation. The ribosome is freed to recommence translation, which seems to be the essential function of trans-translation.</text>
</comment>
<comment type="subcellular location">
    <subcellularLocation>
        <location evidence="1">Cytoplasm</location>
    </subcellularLocation>
    <text evidence="1">The tmRNA-SmpB complex associates with stalled 70S ribosomes.</text>
</comment>
<comment type="similarity">
    <text evidence="1">Belongs to the SmpB family.</text>
</comment>
<comment type="sequence caution" evidence="2">
    <conflict type="erroneous initiation">
        <sequence resource="EMBL-CDS" id="ABQ17875"/>
    </conflict>
    <text>Extended N-terminus.</text>
</comment>
<evidence type="ECO:0000255" key="1">
    <source>
        <dbReference type="HAMAP-Rule" id="MF_00023"/>
    </source>
</evidence>
<evidence type="ECO:0000305" key="2"/>
<sequence>MHYARIVSNLRLGYDIIHMAEYVTLTTNRKAFHNYFLEEKYEAGIMLLGTEIKSLRSGRVNMGDAYVKPQRGELWLVNAHISAYECSGHTSHEPMRERKLLMHRKEIVLLMSKVKEKGLTLIPVRIYLKNDIAKVELSLGRGKKLYDKRDTVTKRDTERELEREVKYRNFRR</sequence>
<reference key="1">
    <citation type="submission" date="2007-05" db="EMBL/GenBank/DDBJ databases">
        <title>Complete sequence of Dehalococcoides sp. BAV1.</title>
        <authorList>
            <consortium name="US DOE Joint Genome Institute"/>
            <person name="Copeland A."/>
            <person name="Lucas S."/>
            <person name="Lapidus A."/>
            <person name="Barry K."/>
            <person name="Detter J.C."/>
            <person name="Glavina del Rio T."/>
            <person name="Hammon N."/>
            <person name="Israni S."/>
            <person name="Pitluck S."/>
            <person name="Lowry S."/>
            <person name="Clum A."/>
            <person name="Schmutz J."/>
            <person name="Larimer F."/>
            <person name="Land M."/>
            <person name="Hauser L."/>
            <person name="Kyrpides N."/>
            <person name="Kim E."/>
            <person name="Ritalahti K.M."/>
            <person name="Loeffler F."/>
            <person name="Richardson P."/>
        </authorList>
    </citation>
    <scope>NUCLEOTIDE SEQUENCE [LARGE SCALE GENOMIC DNA]</scope>
    <source>
        <strain>ATCC BAA-2100 / JCM 16839 / KCTC 5957 / BAV1</strain>
    </source>
</reference>
<protein>
    <recommendedName>
        <fullName evidence="1">SsrA-binding protein</fullName>
    </recommendedName>
    <alternativeName>
        <fullName evidence="1">Small protein B</fullName>
    </alternativeName>
</protein>
<keyword id="KW-0963">Cytoplasm</keyword>
<keyword id="KW-0694">RNA-binding</keyword>
<gene>
    <name evidence="1" type="primary">smpB</name>
    <name type="ordered locus">DehaBAV1_1296</name>
</gene>
<dbReference type="EMBL" id="CP000688">
    <property type="protein sequence ID" value="ABQ17875.1"/>
    <property type="status" value="ALT_INIT"/>
    <property type="molecule type" value="Genomic_DNA"/>
</dbReference>
<dbReference type="SMR" id="A5FPK5"/>
<dbReference type="KEGG" id="deb:DehaBAV1_1296"/>
<dbReference type="PATRIC" id="fig|216389.18.peg.1365"/>
<dbReference type="HOGENOM" id="CLU_108953_0_1_0"/>
<dbReference type="GO" id="GO:0005829">
    <property type="term" value="C:cytosol"/>
    <property type="evidence" value="ECO:0007669"/>
    <property type="project" value="TreeGrafter"/>
</dbReference>
<dbReference type="GO" id="GO:0003723">
    <property type="term" value="F:RNA binding"/>
    <property type="evidence" value="ECO:0007669"/>
    <property type="project" value="UniProtKB-UniRule"/>
</dbReference>
<dbReference type="GO" id="GO:0070929">
    <property type="term" value="P:trans-translation"/>
    <property type="evidence" value="ECO:0007669"/>
    <property type="project" value="UniProtKB-UniRule"/>
</dbReference>
<dbReference type="CDD" id="cd09294">
    <property type="entry name" value="SmpB"/>
    <property type="match status" value="1"/>
</dbReference>
<dbReference type="Gene3D" id="2.40.280.10">
    <property type="match status" value="1"/>
</dbReference>
<dbReference type="HAMAP" id="MF_00023">
    <property type="entry name" value="SmpB"/>
    <property type="match status" value="1"/>
</dbReference>
<dbReference type="InterPro" id="IPR023620">
    <property type="entry name" value="SmpB"/>
</dbReference>
<dbReference type="InterPro" id="IPR000037">
    <property type="entry name" value="SsrA-bd_prot"/>
</dbReference>
<dbReference type="InterPro" id="IPR020081">
    <property type="entry name" value="SsrA-bd_prot_CS"/>
</dbReference>
<dbReference type="NCBIfam" id="NF003843">
    <property type="entry name" value="PRK05422.1"/>
    <property type="match status" value="1"/>
</dbReference>
<dbReference type="NCBIfam" id="TIGR00086">
    <property type="entry name" value="smpB"/>
    <property type="match status" value="1"/>
</dbReference>
<dbReference type="PANTHER" id="PTHR30308:SF2">
    <property type="entry name" value="SSRA-BINDING PROTEIN"/>
    <property type="match status" value="1"/>
</dbReference>
<dbReference type="PANTHER" id="PTHR30308">
    <property type="entry name" value="TMRNA-BINDING COMPONENT OF TRANS-TRANSLATION TAGGING COMPLEX"/>
    <property type="match status" value="1"/>
</dbReference>
<dbReference type="Pfam" id="PF01668">
    <property type="entry name" value="SmpB"/>
    <property type="match status" value="1"/>
</dbReference>
<dbReference type="SUPFAM" id="SSF74982">
    <property type="entry name" value="Small protein B (SmpB)"/>
    <property type="match status" value="1"/>
</dbReference>
<dbReference type="PROSITE" id="PS01317">
    <property type="entry name" value="SSRP"/>
    <property type="match status" value="1"/>
</dbReference>
<organism>
    <name type="scientific">Dehalococcoides mccartyi (strain ATCC BAA-2100 / JCM 16839 / KCTC 5957 / BAV1)</name>
    <dbReference type="NCBI Taxonomy" id="216389"/>
    <lineage>
        <taxon>Bacteria</taxon>
        <taxon>Bacillati</taxon>
        <taxon>Chloroflexota</taxon>
        <taxon>Dehalococcoidia</taxon>
        <taxon>Dehalococcoidales</taxon>
        <taxon>Dehalococcoidaceae</taxon>
        <taxon>Dehalococcoides</taxon>
    </lineage>
</organism>
<proteinExistence type="inferred from homology"/>
<name>SSRP_DEHMB</name>